<comment type="function">
    <text>This is a thiol proteinase inhibitor.</text>
</comment>
<comment type="subcellular location">
    <subcellularLocation>
        <location>Secreted</location>
    </subcellularLocation>
</comment>
<comment type="mass spectrometry"/>
<comment type="similarity">
    <text evidence="3">Belongs to the cystatin family.</text>
</comment>
<dbReference type="EMBL" id="Y10811">
    <property type="protein sequence ID" value="CAA71771.1"/>
    <property type="molecule type" value="mRNA"/>
</dbReference>
<dbReference type="EMBL" id="AB098964">
    <property type="protein sequence ID" value="BAC56454.1"/>
    <property type="molecule type" value="mRNA"/>
</dbReference>
<dbReference type="EMBL" id="AB099041">
    <property type="protein sequence ID" value="BAC56531.1"/>
    <property type="molecule type" value="mRNA"/>
</dbReference>
<dbReference type="EMBL" id="BC109629">
    <property type="protein sequence ID" value="AAI09630.1"/>
    <property type="molecule type" value="mRNA"/>
</dbReference>
<dbReference type="PIR" id="A01271">
    <property type="entry name" value="UDBO"/>
</dbReference>
<dbReference type="PIR" id="S62326">
    <property type="entry name" value="S62326"/>
</dbReference>
<dbReference type="RefSeq" id="NP_776454.1">
    <property type="nucleotide sequence ID" value="NM_174029.1"/>
</dbReference>
<dbReference type="SMR" id="P01035"/>
<dbReference type="FunCoup" id="P01035">
    <property type="interactions" value="162"/>
</dbReference>
<dbReference type="STRING" id="9913.ENSBTAP00000057473"/>
<dbReference type="MEROPS" id="I25.003"/>
<dbReference type="MEROPS" id="I25.004"/>
<dbReference type="PaxDb" id="9913-ENSBTAP00000000790"/>
<dbReference type="PeptideAtlas" id="P01035"/>
<dbReference type="Ensembl" id="ENSBTAT00000000790.6">
    <property type="protein sequence ID" value="ENSBTAP00000000790.4"/>
    <property type="gene ID" value="ENSBTAG00000000598.6"/>
</dbReference>
<dbReference type="GeneID" id="281102"/>
<dbReference type="KEGG" id="bta:281102"/>
<dbReference type="CTD" id="1471"/>
<dbReference type="VEuPathDB" id="HostDB:ENSBTAG00000000598"/>
<dbReference type="eggNOG" id="ENOG502SC50">
    <property type="taxonomic scope" value="Eukaryota"/>
</dbReference>
<dbReference type="GeneTree" id="ENSGT00940000154755"/>
<dbReference type="HOGENOM" id="CLU_118168_0_1_1"/>
<dbReference type="InParanoid" id="P01035"/>
<dbReference type="OMA" id="VKSSCQD"/>
<dbReference type="OrthoDB" id="1908104at2759"/>
<dbReference type="Reactome" id="R-BTA-381426">
    <property type="pathway name" value="Regulation of Insulin-like Growth Factor (IGF) transport and uptake by Insulin-like Growth Factor Binding Proteins (IGFBPs)"/>
</dbReference>
<dbReference type="Reactome" id="R-BTA-6798695">
    <property type="pathway name" value="Neutrophil degranulation"/>
</dbReference>
<dbReference type="Reactome" id="R-BTA-8957275">
    <property type="pathway name" value="Post-translational protein phosphorylation"/>
</dbReference>
<dbReference type="Proteomes" id="UP000009136">
    <property type="component" value="Chromosome 13"/>
</dbReference>
<dbReference type="Bgee" id="ENSBTAG00000000598">
    <property type="expression patterns" value="Expressed in floor plate of diencephalon and 106 other cell types or tissues"/>
</dbReference>
<dbReference type="GO" id="GO:0005737">
    <property type="term" value="C:cytoplasm"/>
    <property type="evidence" value="ECO:0000318"/>
    <property type="project" value="GO_Central"/>
</dbReference>
<dbReference type="GO" id="GO:0005615">
    <property type="term" value="C:extracellular space"/>
    <property type="evidence" value="ECO:0000318"/>
    <property type="project" value="GO_Central"/>
</dbReference>
<dbReference type="GO" id="GO:0031982">
    <property type="term" value="C:vesicle"/>
    <property type="evidence" value="ECO:0000318"/>
    <property type="project" value="GO_Central"/>
</dbReference>
<dbReference type="GO" id="GO:0004869">
    <property type="term" value="F:cysteine-type endopeptidase inhibitor activity"/>
    <property type="evidence" value="ECO:0000318"/>
    <property type="project" value="GO_Central"/>
</dbReference>
<dbReference type="CDD" id="cd00042">
    <property type="entry name" value="CY"/>
    <property type="match status" value="1"/>
</dbReference>
<dbReference type="FunFam" id="3.10.450.10:FF:000004">
    <property type="entry name" value="Cystatin C"/>
    <property type="match status" value="1"/>
</dbReference>
<dbReference type="Gene3D" id="3.10.450.10">
    <property type="match status" value="1"/>
</dbReference>
<dbReference type="InterPro" id="IPR000010">
    <property type="entry name" value="Cystatin_dom"/>
</dbReference>
<dbReference type="InterPro" id="IPR046350">
    <property type="entry name" value="Cystatin_sf"/>
</dbReference>
<dbReference type="InterPro" id="IPR018073">
    <property type="entry name" value="Prot_inh_cystat_CS"/>
</dbReference>
<dbReference type="PANTHER" id="PTHR46186">
    <property type="entry name" value="CYSTATIN"/>
    <property type="match status" value="1"/>
</dbReference>
<dbReference type="PANTHER" id="PTHR46186:SF2">
    <property type="entry name" value="CYSTATIN"/>
    <property type="match status" value="1"/>
</dbReference>
<dbReference type="Pfam" id="PF00031">
    <property type="entry name" value="Cystatin"/>
    <property type="match status" value="1"/>
</dbReference>
<dbReference type="SMART" id="SM00043">
    <property type="entry name" value="CY"/>
    <property type="match status" value="1"/>
</dbReference>
<dbReference type="SUPFAM" id="SSF54403">
    <property type="entry name" value="Cystatin/monellin"/>
    <property type="match status" value="1"/>
</dbReference>
<dbReference type="PROSITE" id="PS00287">
    <property type="entry name" value="CYSTATIN"/>
    <property type="match status" value="1"/>
</dbReference>
<organism>
    <name type="scientific">Bos taurus</name>
    <name type="common">Bovine</name>
    <dbReference type="NCBI Taxonomy" id="9913"/>
    <lineage>
        <taxon>Eukaryota</taxon>
        <taxon>Metazoa</taxon>
        <taxon>Chordata</taxon>
        <taxon>Craniata</taxon>
        <taxon>Vertebrata</taxon>
        <taxon>Euteleostomi</taxon>
        <taxon>Mammalia</taxon>
        <taxon>Eutheria</taxon>
        <taxon>Laurasiatheria</taxon>
        <taxon>Artiodactyla</taxon>
        <taxon>Ruminantia</taxon>
        <taxon>Pecora</taxon>
        <taxon>Bovidae</taxon>
        <taxon>Bovinae</taxon>
        <taxon>Bos</taxon>
    </lineage>
</organism>
<name>CYTC_BOVIN</name>
<feature type="signal peptide" evidence="3">
    <location>
        <begin position="1"/>
        <end position="30"/>
    </location>
</feature>
<feature type="chain" id="PRO_0000006638" description="Cystatin-C">
    <location>
        <begin position="31"/>
        <end position="148"/>
    </location>
</feature>
<feature type="short sequence motif" description="Secondary area of contact">
    <location>
        <begin position="84"/>
        <end position="88"/>
    </location>
</feature>
<feature type="site" description="Reactive site">
    <location>
        <position position="40"/>
    </location>
</feature>
<feature type="modified residue" description="Pyrrolidone carboxylic acid" evidence="2">
    <location>
        <position position="31"/>
    </location>
</feature>
<feature type="disulfide bond" evidence="1">
    <location>
        <begin position="102"/>
        <end position="112"/>
    </location>
</feature>
<feature type="disulfide bond" evidence="1">
    <location>
        <begin position="126"/>
        <end position="146"/>
    </location>
</feature>
<gene>
    <name type="primary">CST3</name>
</gene>
<protein>
    <recommendedName>
        <fullName>Cystatin-C</fullName>
    </recommendedName>
    <alternativeName>
        <fullName>Colostrum thiol proteinase inhibitor</fullName>
    </alternativeName>
    <alternativeName>
        <fullName>Cystatin-3</fullName>
    </alternativeName>
</protein>
<keyword id="KW-0903">Direct protein sequencing</keyword>
<keyword id="KW-1015">Disulfide bond</keyword>
<keyword id="KW-0646">Protease inhibitor</keyword>
<keyword id="KW-0873">Pyrrolidone carboxylic acid</keyword>
<keyword id="KW-1185">Reference proteome</keyword>
<keyword id="KW-0964">Secreted</keyword>
<keyword id="KW-0732">Signal</keyword>
<keyword id="KW-0789">Thiol protease inhibitor</keyword>
<sequence>MVGSPRAPLLLLASLIVALALALAVSPAAAQGPRKGRLLGGLMEADVNEEGVQEALSFAVSEFNKRSNDAYQSRVVRVVRARKQVVSGMNYFLDVELGRTTCTKSQANLDSCPFHNQPHLKREKLCSFQVYVVPWMNTINLVKFSCQD</sequence>
<accession>P01035</accession>
<accession>Q54A26</accession>
<evidence type="ECO:0000250" key="1"/>
<evidence type="ECO:0000269" key="2">
    <source>
    </source>
</evidence>
<evidence type="ECO:0000305" key="3"/>
<reference key="1">
    <citation type="journal article" date="1997" name="Biochim. Biophys. Acta">
        <title>Molecular cloning and N-terminal analysis of bovine cystatin C identification of a full-length N-terminal region.</title>
        <authorList>
            <person name="Olsson S.-L."/>
            <person name="Ek B."/>
            <person name="Wilm M."/>
            <person name="Broberg S."/>
            <person name="Rask L."/>
            <person name="Bjoerk I."/>
        </authorList>
    </citation>
    <scope>NUCLEOTIDE SEQUENCE [MRNA]</scope>
    <scope>PROTEIN SEQUENCE OF 66-83</scope>
    <scope>PYROGLUTAMATE FORMATION AT GLN-31</scope>
    <scope>CHARACTERIZATION</scope>
    <scope>MASS SPECTROMETRY</scope>
    <source>
        <tissue>Cerebrospinal fluid</tissue>
        <tissue>Choroid plexus</tissue>
    </source>
</reference>
<reference key="2">
    <citation type="journal article" date="2003" name="Mol. Reprod. Dev.">
        <title>Characterization of gene expression profiles in early bovine pregnancy using a custom cDNA microarray.</title>
        <authorList>
            <person name="Ishiwata H."/>
            <person name="Katsuma S."/>
            <person name="Kizaki K."/>
            <person name="Patel O.V."/>
            <person name="Nakano H."/>
            <person name="Takahashi T."/>
            <person name="Imai K."/>
            <person name="Hirasawa A."/>
            <person name="Shiojima S."/>
            <person name="Ikawa H."/>
            <person name="Suzuki Y."/>
            <person name="Tsujimoto G."/>
            <person name="Izaike Y."/>
            <person name="Todoroki J."/>
            <person name="Hashizume K."/>
        </authorList>
    </citation>
    <scope>NUCLEOTIDE SEQUENCE [LARGE SCALE MRNA]</scope>
</reference>
<reference key="3">
    <citation type="submission" date="2005-11" db="EMBL/GenBank/DDBJ databases">
        <authorList>
            <consortium name="NIH - Mammalian Gene Collection (MGC) project"/>
        </authorList>
    </citation>
    <scope>NUCLEOTIDE SEQUENCE [LARGE SCALE MRNA]</scope>
    <source>
        <strain>Crossbred X Angus</strain>
        <tissue>Liver</tissue>
    </source>
</reference>
<reference key="4">
    <citation type="journal article" date="1985" name="FEBS Lett.">
        <title>Complete amino acid sequence of bovine colostrum low-Mr cysteine proteinase inhibitor.</title>
        <authorList>
            <person name="Hirado M."/>
            <person name="Tsunasawa S."/>
            <person name="Sakiyama F."/>
            <person name="Niinobe M."/>
            <person name="Fujii S."/>
        </authorList>
    </citation>
    <scope>PROTEIN SEQUENCE OF 37-148</scope>
</reference>
<proteinExistence type="evidence at protein level"/>